<keyword id="KW-0472">Membrane</keyword>
<keyword id="KW-1185">Reference proteome</keyword>
<keyword id="KW-0735">Signal-anchor</keyword>
<keyword id="KW-0812">Transmembrane</keyword>
<keyword id="KW-1133">Transmembrane helix</keyword>
<organism>
    <name type="scientific">Arabidopsis thaliana</name>
    <name type="common">Mouse-ear cress</name>
    <dbReference type="NCBI Taxonomy" id="3702"/>
    <lineage>
        <taxon>Eukaryota</taxon>
        <taxon>Viridiplantae</taxon>
        <taxon>Streptophyta</taxon>
        <taxon>Embryophyta</taxon>
        <taxon>Tracheophyta</taxon>
        <taxon>Spermatophyta</taxon>
        <taxon>Magnoliopsida</taxon>
        <taxon>eudicotyledons</taxon>
        <taxon>Gunneridae</taxon>
        <taxon>Pentapetalae</taxon>
        <taxon>rosids</taxon>
        <taxon>malvids</taxon>
        <taxon>Brassicales</taxon>
        <taxon>Brassicaceae</taxon>
        <taxon>Camelineae</taxon>
        <taxon>Arabidopsis</taxon>
    </lineage>
</organism>
<proteinExistence type="evidence at transcript level"/>
<gene>
    <name type="primary">TBL39</name>
    <name type="ordered locus">At2g42570</name>
    <name type="ORF">F14N22.16</name>
</gene>
<evidence type="ECO:0000250" key="1">
    <source>
        <dbReference type="UniProtKB" id="Q9FG35"/>
    </source>
</evidence>
<evidence type="ECO:0000250" key="2">
    <source>
        <dbReference type="UniProtKB" id="Q9LY46"/>
    </source>
</evidence>
<evidence type="ECO:0000255" key="3"/>
<evidence type="ECO:0000305" key="4"/>
<evidence type="ECO:0000305" key="5">
    <source>
    </source>
</evidence>
<comment type="function">
    <text evidence="1 2">May act as a bridging protein that binds pectin and other cell wall polysaccharides. Probably involved in maintaining esterification of pectins (By similarity). May be involved in the specific O-acetylation of cell wall polymers (By similarity).</text>
</comment>
<comment type="subcellular location">
    <subcellularLocation>
        <location evidence="4">Membrane</location>
        <topology evidence="4">Single-pass type II membrane protein</topology>
    </subcellularLocation>
</comment>
<comment type="miscellaneous">
    <text evidence="5">Contains 2 motifs that are conserved in esterases, but it is unlikely that this protein belongs to the catalytically active pectin esterases.</text>
</comment>
<comment type="similarity">
    <text evidence="4">Belongs to the PC-esterase family. TBL subfamily.</text>
</comment>
<accession>Q9SIN2</accession>
<reference key="1">
    <citation type="journal article" date="1999" name="Nature">
        <title>Sequence and analysis of chromosome 2 of the plant Arabidopsis thaliana.</title>
        <authorList>
            <person name="Lin X."/>
            <person name="Kaul S."/>
            <person name="Rounsley S.D."/>
            <person name="Shea T.P."/>
            <person name="Benito M.-I."/>
            <person name="Town C.D."/>
            <person name="Fujii C.Y."/>
            <person name="Mason T.M."/>
            <person name="Bowman C.L."/>
            <person name="Barnstead M.E."/>
            <person name="Feldblyum T.V."/>
            <person name="Buell C.R."/>
            <person name="Ketchum K.A."/>
            <person name="Lee J.J."/>
            <person name="Ronning C.M."/>
            <person name="Koo H.L."/>
            <person name="Moffat K.S."/>
            <person name="Cronin L.A."/>
            <person name="Shen M."/>
            <person name="Pai G."/>
            <person name="Van Aken S."/>
            <person name="Umayam L."/>
            <person name="Tallon L.J."/>
            <person name="Gill J.E."/>
            <person name="Adams M.D."/>
            <person name="Carrera A.J."/>
            <person name="Creasy T.H."/>
            <person name="Goodman H.M."/>
            <person name="Somerville C.R."/>
            <person name="Copenhaver G.P."/>
            <person name="Preuss D."/>
            <person name="Nierman W.C."/>
            <person name="White O."/>
            <person name="Eisen J.A."/>
            <person name="Salzberg S.L."/>
            <person name="Fraser C.M."/>
            <person name="Venter J.C."/>
        </authorList>
    </citation>
    <scope>NUCLEOTIDE SEQUENCE [LARGE SCALE GENOMIC DNA]</scope>
    <source>
        <strain>cv. Columbia</strain>
    </source>
</reference>
<reference key="2">
    <citation type="journal article" date="2017" name="Plant J.">
        <title>Araport11: a complete reannotation of the Arabidopsis thaliana reference genome.</title>
        <authorList>
            <person name="Cheng C.Y."/>
            <person name="Krishnakumar V."/>
            <person name="Chan A.P."/>
            <person name="Thibaud-Nissen F."/>
            <person name="Schobel S."/>
            <person name="Town C.D."/>
        </authorList>
    </citation>
    <scope>GENOME REANNOTATION</scope>
    <source>
        <strain>cv. Columbia</strain>
    </source>
</reference>
<reference key="3">
    <citation type="journal article" date="2003" name="Science">
        <title>Empirical analysis of transcriptional activity in the Arabidopsis genome.</title>
        <authorList>
            <person name="Yamada K."/>
            <person name="Lim J."/>
            <person name="Dale J.M."/>
            <person name="Chen H."/>
            <person name="Shinn P."/>
            <person name="Palm C.J."/>
            <person name="Southwick A.M."/>
            <person name="Wu H.C."/>
            <person name="Kim C.J."/>
            <person name="Nguyen M."/>
            <person name="Pham P.K."/>
            <person name="Cheuk R.F."/>
            <person name="Karlin-Newmann G."/>
            <person name="Liu S.X."/>
            <person name="Lam B."/>
            <person name="Sakano H."/>
            <person name="Wu T."/>
            <person name="Yu G."/>
            <person name="Miranda M."/>
            <person name="Quach H.L."/>
            <person name="Tripp M."/>
            <person name="Chang C.H."/>
            <person name="Lee J.M."/>
            <person name="Toriumi M.J."/>
            <person name="Chan M.M."/>
            <person name="Tang C.C."/>
            <person name="Onodera C.S."/>
            <person name="Deng J.M."/>
            <person name="Akiyama K."/>
            <person name="Ansari Y."/>
            <person name="Arakawa T."/>
            <person name="Banh J."/>
            <person name="Banno F."/>
            <person name="Bowser L."/>
            <person name="Brooks S.Y."/>
            <person name="Carninci P."/>
            <person name="Chao Q."/>
            <person name="Choy N."/>
            <person name="Enju A."/>
            <person name="Goldsmith A.D."/>
            <person name="Gurjal M."/>
            <person name="Hansen N.F."/>
            <person name="Hayashizaki Y."/>
            <person name="Johnson-Hopson C."/>
            <person name="Hsuan V.W."/>
            <person name="Iida K."/>
            <person name="Karnes M."/>
            <person name="Khan S."/>
            <person name="Koesema E."/>
            <person name="Ishida J."/>
            <person name="Jiang P.X."/>
            <person name="Jones T."/>
            <person name="Kawai J."/>
            <person name="Kamiya A."/>
            <person name="Meyers C."/>
            <person name="Nakajima M."/>
            <person name="Narusaka M."/>
            <person name="Seki M."/>
            <person name="Sakurai T."/>
            <person name="Satou M."/>
            <person name="Tamse R."/>
            <person name="Vaysberg M."/>
            <person name="Wallender E.K."/>
            <person name="Wong C."/>
            <person name="Yamamura Y."/>
            <person name="Yuan S."/>
            <person name="Shinozaki K."/>
            <person name="Davis R.W."/>
            <person name="Theologis A."/>
            <person name="Ecker J.R."/>
        </authorList>
    </citation>
    <scope>NUCLEOTIDE SEQUENCE [LARGE SCALE MRNA]</scope>
    <source>
        <strain>cv. Columbia</strain>
    </source>
</reference>
<reference key="4">
    <citation type="journal article" date="2007" name="Plant J.">
        <title>Arabidopsis ESK1 encodes a novel regulator of freezing tolerance.</title>
        <authorList>
            <person name="Xin Z."/>
            <person name="Mandaokar A."/>
            <person name="Chen J."/>
            <person name="Last R.L."/>
            <person name="Browse J."/>
        </authorList>
    </citation>
    <scope>GENE FAMILY</scope>
    <source>
        <strain>cv. Columbia</strain>
    </source>
</reference>
<reference key="5">
    <citation type="journal article" date="2010" name="Plant Physiol.">
        <title>TRICHOME BIREFRINGENCE and its homolog AT5G01360 encode plant-specific DUF231 proteins required for cellulose biosynthesis in Arabidopsis.</title>
        <authorList>
            <person name="Bischoff V."/>
            <person name="Nita S."/>
            <person name="Neumetzler L."/>
            <person name="Schindelasch D."/>
            <person name="Urbain A."/>
            <person name="Eshed R."/>
            <person name="Persson S."/>
            <person name="Delmer D."/>
            <person name="Scheible W.R."/>
        </authorList>
    </citation>
    <scope>GENE FAMILY</scope>
    <scope>NOMENCLATURE</scope>
</reference>
<reference key="6">
    <citation type="journal article" date="2010" name="Plant Signal. Behav.">
        <title>Involvement of TBL/DUF231 proteins into cell wall biology.</title>
        <authorList>
            <person name="Bischoff V."/>
            <person name="Selbig J."/>
            <person name="Scheible W.R."/>
        </authorList>
    </citation>
    <scope>3D-STRUCTURE MODELING</scope>
</reference>
<feature type="chain" id="PRO_0000425404" description="Protein trichome birefringence-like 39">
    <location>
        <begin position="1"/>
        <end position="367"/>
    </location>
</feature>
<feature type="transmembrane region" description="Helical; Signal-anchor for type II membrane protein" evidence="3">
    <location>
        <begin position="7"/>
        <end position="29"/>
    </location>
</feature>
<feature type="short sequence motif" description="GDS motif">
    <location>
        <begin position="120"/>
        <end position="122"/>
    </location>
</feature>
<feature type="short sequence motif" description="DCXHWCLPGXXDXWN motif">
    <location>
        <begin position="343"/>
        <end position="357"/>
    </location>
</feature>
<protein>
    <recommendedName>
        <fullName>Protein trichome birefringence-like 39</fullName>
    </recommendedName>
</protein>
<sequence>MGFTSRGNPSFLFFFFFFLCLSTVSAYINSTSSNNDEVRRELASGRCNWFRGNWVYDVKYPLYDPYKCPFIDPQFNCKKYGRPDNAYLKYRWQPSSCSLPRFNGLYFLRRMRGKKIMFVGDSLSTNMWQSLACLIHSWVPNTRYTLIRQKGLASLTFEEYGVTLLLYRTQFLVDLNVEKVGRVLKLDSIKQGNMWRGMDVLIFNSWHWWTHTEHIQPWDYMEDGNRLYKDMNRLVAFYKGMTTWARWVNAYVDPSKTKVFFNGVSPTHYEGKDWGEPMNSCRSQTQPFYGRKYPGGTPMAWVILNKVMRRLKKPVHWLDITGLSQLRKDAHPSAFSGNHPGNDCSHWCLPGLPDTWNLLFYSTLFSS</sequence>
<name>TBL39_ARATH</name>
<dbReference type="EMBL" id="AC007087">
    <property type="protein sequence ID" value="AAD22996.1"/>
    <property type="molecule type" value="Genomic_DNA"/>
</dbReference>
<dbReference type="EMBL" id="CP002685">
    <property type="protein sequence ID" value="AEC10140.1"/>
    <property type="molecule type" value="Genomic_DNA"/>
</dbReference>
<dbReference type="EMBL" id="AY034968">
    <property type="protein sequence ID" value="AAK59473.1"/>
    <property type="molecule type" value="mRNA"/>
</dbReference>
<dbReference type="EMBL" id="AY062974">
    <property type="protein sequence ID" value="AAL34148.1"/>
    <property type="molecule type" value="mRNA"/>
</dbReference>
<dbReference type="PIR" id="E84855">
    <property type="entry name" value="E84855"/>
</dbReference>
<dbReference type="RefSeq" id="NP_565975.1">
    <property type="nucleotide sequence ID" value="NM_129818.4"/>
</dbReference>
<dbReference type="SMR" id="Q9SIN2"/>
<dbReference type="FunCoup" id="Q9SIN2">
    <property type="interactions" value="54"/>
</dbReference>
<dbReference type="STRING" id="3702.Q9SIN2"/>
<dbReference type="PaxDb" id="3702-AT2G42570.1"/>
<dbReference type="ProteomicsDB" id="234148"/>
<dbReference type="EnsemblPlants" id="AT2G42570.1">
    <property type="protein sequence ID" value="AT2G42570.1"/>
    <property type="gene ID" value="AT2G42570"/>
</dbReference>
<dbReference type="GeneID" id="818857"/>
<dbReference type="Gramene" id="AT2G42570.1">
    <property type="protein sequence ID" value="AT2G42570.1"/>
    <property type="gene ID" value="AT2G42570"/>
</dbReference>
<dbReference type="KEGG" id="ath:AT2G42570"/>
<dbReference type="Araport" id="AT2G42570"/>
<dbReference type="TAIR" id="AT2G42570">
    <property type="gene designation" value="TBL39"/>
</dbReference>
<dbReference type="eggNOG" id="ENOG502QQWH">
    <property type="taxonomic scope" value="Eukaryota"/>
</dbReference>
<dbReference type="HOGENOM" id="CLU_020953_3_0_1"/>
<dbReference type="InParanoid" id="Q9SIN2"/>
<dbReference type="OMA" id="DWNQPAR"/>
<dbReference type="PhylomeDB" id="Q9SIN2"/>
<dbReference type="PRO" id="PR:Q9SIN2"/>
<dbReference type="Proteomes" id="UP000006548">
    <property type="component" value="Chromosome 2"/>
</dbReference>
<dbReference type="ExpressionAtlas" id="Q9SIN2">
    <property type="expression patterns" value="baseline and differential"/>
</dbReference>
<dbReference type="GO" id="GO:0016020">
    <property type="term" value="C:membrane"/>
    <property type="evidence" value="ECO:0007669"/>
    <property type="project" value="UniProtKB-SubCell"/>
</dbReference>
<dbReference type="GO" id="GO:0009506">
    <property type="term" value="C:plasmodesma"/>
    <property type="evidence" value="ECO:0007005"/>
    <property type="project" value="TAIR"/>
</dbReference>
<dbReference type="GO" id="GO:0005773">
    <property type="term" value="C:vacuole"/>
    <property type="evidence" value="ECO:0007005"/>
    <property type="project" value="TAIR"/>
</dbReference>
<dbReference type="GO" id="GO:0016413">
    <property type="term" value="F:O-acetyltransferase activity"/>
    <property type="evidence" value="ECO:0007669"/>
    <property type="project" value="InterPro"/>
</dbReference>
<dbReference type="InterPro" id="IPR029962">
    <property type="entry name" value="TBL"/>
</dbReference>
<dbReference type="InterPro" id="IPR026057">
    <property type="entry name" value="TBL_C"/>
</dbReference>
<dbReference type="InterPro" id="IPR025846">
    <property type="entry name" value="TBL_N"/>
</dbReference>
<dbReference type="PANTHER" id="PTHR32285:SF71">
    <property type="entry name" value="PROTEIN TRICHOME BIREFRINGENCE-LIKE 39"/>
    <property type="match status" value="1"/>
</dbReference>
<dbReference type="PANTHER" id="PTHR32285">
    <property type="entry name" value="PROTEIN TRICHOME BIREFRINGENCE-LIKE 9-RELATED"/>
    <property type="match status" value="1"/>
</dbReference>
<dbReference type="Pfam" id="PF13839">
    <property type="entry name" value="PC-Esterase"/>
    <property type="match status" value="1"/>
</dbReference>
<dbReference type="Pfam" id="PF14416">
    <property type="entry name" value="PMR5N"/>
    <property type="match status" value="1"/>
</dbReference>